<organism>
    <name type="scientific">Bifidobacterium longum subsp. infantis (strain ATCC 15697 / DSM 20088 / JCM 1222 / NCTC 11817 / S12)</name>
    <dbReference type="NCBI Taxonomy" id="391904"/>
    <lineage>
        <taxon>Bacteria</taxon>
        <taxon>Bacillati</taxon>
        <taxon>Actinomycetota</taxon>
        <taxon>Actinomycetes</taxon>
        <taxon>Bifidobacteriales</taxon>
        <taxon>Bifidobacteriaceae</taxon>
        <taxon>Bifidobacterium</taxon>
    </lineage>
</organism>
<proteinExistence type="inferred from homology"/>
<keyword id="KW-0687">Ribonucleoprotein</keyword>
<keyword id="KW-0689">Ribosomal protein</keyword>
<reference key="1">
    <citation type="journal article" date="2008" name="Proc. Natl. Acad. Sci. U.S.A.">
        <title>The genome sequence of Bifidobacterium longum subsp. infantis reveals adaptations for milk utilization within the infant microbiome.</title>
        <authorList>
            <person name="Sela D.A."/>
            <person name="Chapman J."/>
            <person name="Adeuya A."/>
            <person name="Kim J.H."/>
            <person name="Chen F."/>
            <person name="Whitehead T.R."/>
            <person name="Lapidus A."/>
            <person name="Rokhsar D.S."/>
            <person name="Lebrilla C.B."/>
            <person name="German J.B."/>
            <person name="Price N.P."/>
            <person name="Richardson P.M."/>
            <person name="Mills D.A."/>
        </authorList>
    </citation>
    <scope>NUCLEOTIDE SEQUENCE [LARGE SCALE GENOMIC DNA]</scope>
    <source>
        <strain>ATCC 15697 / DSM 20088 / JCM 1222 / NCTC 11817 / S12</strain>
    </source>
</reference>
<reference key="2">
    <citation type="journal article" date="2011" name="Nature">
        <title>Bifidobacteria can protect from enteropathogenic infection through production of acetate.</title>
        <authorList>
            <person name="Fukuda S."/>
            <person name="Toh H."/>
            <person name="Hase K."/>
            <person name="Oshima K."/>
            <person name="Nakanishi Y."/>
            <person name="Yoshimura K."/>
            <person name="Tobe T."/>
            <person name="Clarke J.M."/>
            <person name="Topping D.L."/>
            <person name="Suzuki T."/>
            <person name="Taylor T.D."/>
            <person name="Itoh K."/>
            <person name="Kikuchi J."/>
            <person name="Morita H."/>
            <person name="Hattori M."/>
            <person name="Ohno H."/>
        </authorList>
    </citation>
    <scope>NUCLEOTIDE SEQUENCE [LARGE SCALE GENOMIC DNA]</scope>
    <source>
        <strain>ATCC 15697 / DSM 20088 / JCM 1222 / NCTC 11817 / S12</strain>
    </source>
</reference>
<feature type="chain" id="PRO_1000196288" description="Small ribosomal subunit protein uS10">
    <location>
        <begin position="1"/>
        <end position="102"/>
    </location>
</feature>
<name>RS10_BIFLS</name>
<comment type="function">
    <text evidence="1">Involved in the binding of tRNA to the ribosomes.</text>
</comment>
<comment type="subunit">
    <text evidence="1">Part of the 30S ribosomal subunit.</text>
</comment>
<comment type="similarity">
    <text evidence="1">Belongs to the universal ribosomal protein uS10 family.</text>
</comment>
<sequence length="102" mass="11557">MAGQKIRIRLKSYDHEVIDQSAKKIVETVTNAGATVVGPVPLPTEKNVFCVIRSPHMYKDSREHFEMRTHKRLIDIVDPTPKAVDSLMHIDLPADVNIEIKL</sequence>
<protein>
    <recommendedName>
        <fullName evidence="1">Small ribosomal subunit protein uS10</fullName>
    </recommendedName>
    <alternativeName>
        <fullName evidence="2">30S ribosomal protein S10</fullName>
    </alternativeName>
</protein>
<dbReference type="EMBL" id="CP001095">
    <property type="protein sequence ID" value="ACJ53297.1"/>
    <property type="molecule type" value="Genomic_DNA"/>
</dbReference>
<dbReference type="EMBL" id="AP010889">
    <property type="protein sequence ID" value="BAJ69888.1"/>
    <property type="molecule type" value="Genomic_DNA"/>
</dbReference>
<dbReference type="RefSeq" id="WP_012578474.1">
    <property type="nucleotide sequence ID" value="NC_011593.1"/>
</dbReference>
<dbReference type="SMR" id="B7GNE1"/>
<dbReference type="KEGG" id="bln:Blon_2238"/>
<dbReference type="KEGG" id="blon:BLIJ_2311"/>
<dbReference type="PATRIC" id="fig|391904.8.peg.2313"/>
<dbReference type="HOGENOM" id="CLU_122625_1_3_11"/>
<dbReference type="Proteomes" id="UP000001360">
    <property type="component" value="Chromosome"/>
</dbReference>
<dbReference type="GO" id="GO:1990904">
    <property type="term" value="C:ribonucleoprotein complex"/>
    <property type="evidence" value="ECO:0007669"/>
    <property type="project" value="UniProtKB-KW"/>
</dbReference>
<dbReference type="GO" id="GO:0005840">
    <property type="term" value="C:ribosome"/>
    <property type="evidence" value="ECO:0007669"/>
    <property type="project" value="UniProtKB-KW"/>
</dbReference>
<dbReference type="GO" id="GO:0003735">
    <property type="term" value="F:structural constituent of ribosome"/>
    <property type="evidence" value="ECO:0007669"/>
    <property type="project" value="InterPro"/>
</dbReference>
<dbReference type="GO" id="GO:0000049">
    <property type="term" value="F:tRNA binding"/>
    <property type="evidence" value="ECO:0007669"/>
    <property type="project" value="UniProtKB-UniRule"/>
</dbReference>
<dbReference type="GO" id="GO:0006412">
    <property type="term" value="P:translation"/>
    <property type="evidence" value="ECO:0007669"/>
    <property type="project" value="UniProtKB-UniRule"/>
</dbReference>
<dbReference type="FunFam" id="3.30.70.600:FF:000001">
    <property type="entry name" value="30S ribosomal protein S10"/>
    <property type="match status" value="1"/>
</dbReference>
<dbReference type="Gene3D" id="3.30.70.600">
    <property type="entry name" value="Ribosomal protein S10 domain"/>
    <property type="match status" value="1"/>
</dbReference>
<dbReference type="HAMAP" id="MF_00508">
    <property type="entry name" value="Ribosomal_uS10"/>
    <property type="match status" value="1"/>
</dbReference>
<dbReference type="InterPro" id="IPR001848">
    <property type="entry name" value="Ribosomal_uS10"/>
</dbReference>
<dbReference type="InterPro" id="IPR018268">
    <property type="entry name" value="Ribosomal_uS10_CS"/>
</dbReference>
<dbReference type="InterPro" id="IPR027486">
    <property type="entry name" value="Ribosomal_uS10_dom"/>
</dbReference>
<dbReference type="InterPro" id="IPR036838">
    <property type="entry name" value="Ribosomal_uS10_dom_sf"/>
</dbReference>
<dbReference type="NCBIfam" id="NF001861">
    <property type="entry name" value="PRK00596.1"/>
    <property type="match status" value="1"/>
</dbReference>
<dbReference type="NCBIfam" id="TIGR01049">
    <property type="entry name" value="rpsJ_bact"/>
    <property type="match status" value="1"/>
</dbReference>
<dbReference type="PANTHER" id="PTHR11700">
    <property type="entry name" value="30S RIBOSOMAL PROTEIN S10 FAMILY MEMBER"/>
    <property type="match status" value="1"/>
</dbReference>
<dbReference type="Pfam" id="PF00338">
    <property type="entry name" value="Ribosomal_S10"/>
    <property type="match status" value="1"/>
</dbReference>
<dbReference type="PRINTS" id="PR00971">
    <property type="entry name" value="RIBOSOMALS10"/>
</dbReference>
<dbReference type="SMART" id="SM01403">
    <property type="entry name" value="Ribosomal_S10"/>
    <property type="match status" value="1"/>
</dbReference>
<dbReference type="SUPFAM" id="SSF54999">
    <property type="entry name" value="Ribosomal protein S10"/>
    <property type="match status" value="1"/>
</dbReference>
<dbReference type="PROSITE" id="PS00361">
    <property type="entry name" value="RIBOSOMAL_S10"/>
    <property type="match status" value="1"/>
</dbReference>
<gene>
    <name evidence="1" type="primary">rpsJ</name>
    <name type="ordered locus">Blon_2238</name>
    <name type="ordered locus">BLIJ_2311</name>
</gene>
<evidence type="ECO:0000255" key="1">
    <source>
        <dbReference type="HAMAP-Rule" id="MF_00508"/>
    </source>
</evidence>
<evidence type="ECO:0000305" key="2"/>
<accession>B7GNE1</accession>
<accession>E8MN85</accession>